<dbReference type="EC" id="2.7.2.3" evidence="1"/>
<dbReference type="EMBL" id="CP000480">
    <property type="protein sequence ID" value="ABK71882.1"/>
    <property type="molecule type" value="Genomic_DNA"/>
</dbReference>
<dbReference type="EMBL" id="CP001663">
    <property type="protein sequence ID" value="AFP39471.1"/>
    <property type="molecule type" value="Genomic_DNA"/>
</dbReference>
<dbReference type="RefSeq" id="WP_003894473.1">
    <property type="nucleotide sequence ID" value="NZ_SIJM01000002.1"/>
</dbReference>
<dbReference type="RefSeq" id="YP_887401.1">
    <property type="nucleotide sequence ID" value="NC_008596.1"/>
</dbReference>
<dbReference type="SMR" id="A0QWW3"/>
<dbReference type="STRING" id="246196.MSMEG_3085"/>
<dbReference type="PaxDb" id="246196-MSMEI_3007"/>
<dbReference type="KEGG" id="msb:LJ00_15350"/>
<dbReference type="KEGG" id="msg:MSMEI_3007"/>
<dbReference type="KEGG" id="msm:MSMEG_3085"/>
<dbReference type="PATRIC" id="fig|246196.19.peg.3046"/>
<dbReference type="eggNOG" id="COG0126">
    <property type="taxonomic scope" value="Bacteria"/>
</dbReference>
<dbReference type="OrthoDB" id="9808460at2"/>
<dbReference type="UniPathway" id="UPA00109">
    <property type="reaction ID" value="UER00185"/>
</dbReference>
<dbReference type="Proteomes" id="UP000000757">
    <property type="component" value="Chromosome"/>
</dbReference>
<dbReference type="Proteomes" id="UP000006158">
    <property type="component" value="Chromosome"/>
</dbReference>
<dbReference type="GO" id="GO:0005829">
    <property type="term" value="C:cytosol"/>
    <property type="evidence" value="ECO:0007669"/>
    <property type="project" value="TreeGrafter"/>
</dbReference>
<dbReference type="GO" id="GO:0043531">
    <property type="term" value="F:ADP binding"/>
    <property type="evidence" value="ECO:0007669"/>
    <property type="project" value="TreeGrafter"/>
</dbReference>
<dbReference type="GO" id="GO:0005524">
    <property type="term" value="F:ATP binding"/>
    <property type="evidence" value="ECO:0007669"/>
    <property type="project" value="UniProtKB-KW"/>
</dbReference>
<dbReference type="GO" id="GO:0004618">
    <property type="term" value="F:phosphoglycerate kinase activity"/>
    <property type="evidence" value="ECO:0007669"/>
    <property type="project" value="UniProtKB-UniRule"/>
</dbReference>
<dbReference type="GO" id="GO:0006094">
    <property type="term" value="P:gluconeogenesis"/>
    <property type="evidence" value="ECO:0007669"/>
    <property type="project" value="TreeGrafter"/>
</dbReference>
<dbReference type="GO" id="GO:0006096">
    <property type="term" value="P:glycolytic process"/>
    <property type="evidence" value="ECO:0007669"/>
    <property type="project" value="UniProtKB-UniRule"/>
</dbReference>
<dbReference type="CDD" id="cd00318">
    <property type="entry name" value="Phosphoglycerate_kinase"/>
    <property type="match status" value="1"/>
</dbReference>
<dbReference type="FunFam" id="3.40.50.1260:FF:000003">
    <property type="entry name" value="Phosphoglycerate kinase"/>
    <property type="match status" value="1"/>
</dbReference>
<dbReference type="FunFam" id="3.40.50.1260:FF:000006">
    <property type="entry name" value="Phosphoglycerate kinase"/>
    <property type="match status" value="1"/>
</dbReference>
<dbReference type="Gene3D" id="3.40.50.1260">
    <property type="entry name" value="Phosphoglycerate kinase, N-terminal domain"/>
    <property type="match status" value="2"/>
</dbReference>
<dbReference type="HAMAP" id="MF_00145">
    <property type="entry name" value="Phosphoglyc_kinase"/>
    <property type="match status" value="1"/>
</dbReference>
<dbReference type="InterPro" id="IPR001576">
    <property type="entry name" value="Phosphoglycerate_kinase"/>
</dbReference>
<dbReference type="InterPro" id="IPR015911">
    <property type="entry name" value="Phosphoglycerate_kinase_CS"/>
</dbReference>
<dbReference type="InterPro" id="IPR015824">
    <property type="entry name" value="Phosphoglycerate_kinase_N"/>
</dbReference>
<dbReference type="InterPro" id="IPR036043">
    <property type="entry name" value="Phosphoglycerate_kinase_sf"/>
</dbReference>
<dbReference type="PANTHER" id="PTHR11406">
    <property type="entry name" value="PHOSPHOGLYCERATE KINASE"/>
    <property type="match status" value="1"/>
</dbReference>
<dbReference type="PANTHER" id="PTHR11406:SF23">
    <property type="entry name" value="PHOSPHOGLYCERATE KINASE 1, CHLOROPLASTIC-RELATED"/>
    <property type="match status" value="1"/>
</dbReference>
<dbReference type="Pfam" id="PF00162">
    <property type="entry name" value="PGK"/>
    <property type="match status" value="1"/>
</dbReference>
<dbReference type="PIRSF" id="PIRSF000724">
    <property type="entry name" value="Pgk"/>
    <property type="match status" value="1"/>
</dbReference>
<dbReference type="PRINTS" id="PR00477">
    <property type="entry name" value="PHGLYCKINASE"/>
</dbReference>
<dbReference type="SUPFAM" id="SSF53748">
    <property type="entry name" value="Phosphoglycerate kinase"/>
    <property type="match status" value="1"/>
</dbReference>
<dbReference type="PROSITE" id="PS00111">
    <property type="entry name" value="PGLYCERATE_KINASE"/>
    <property type="match status" value="1"/>
</dbReference>
<evidence type="ECO:0000255" key="1">
    <source>
        <dbReference type="HAMAP-Rule" id="MF_00145"/>
    </source>
</evidence>
<evidence type="ECO:0000269" key="2">
    <source>
    </source>
</evidence>
<gene>
    <name evidence="1" type="primary">pgk</name>
    <name type="ordered locus">MSMEG_3085</name>
    <name type="ordered locus">MSMEI_3007</name>
</gene>
<organism>
    <name type="scientific">Mycolicibacterium smegmatis (strain ATCC 700084 / mc(2)155)</name>
    <name type="common">Mycobacterium smegmatis</name>
    <dbReference type="NCBI Taxonomy" id="246196"/>
    <lineage>
        <taxon>Bacteria</taxon>
        <taxon>Bacillati</taxon>
        <taxon>Actinomycetota</taxon>
        <taxon>Actinomycetes</taxon>
        <taxon>Mycobacteriales</taxon>
        <taxon>Mycobacteriaceae</taxon>
        <taxon>Mycolicibacterium</taxon>
    </lineage>
</organism>
<name>PGK_MYCS2</name>
<feature type="initiator methionine" description="Removed" evidence="2">
    <location>
        <position position="1"/>
    </location>
</feature>
<feature type="chain" id="PRO_1000009631" description="Phosphoglycerate kinase">
    <location>
        <begin position="2"/>
        <end position="408"/>
    </location>
</feature>
<feature type="binding site" evidence="1">
    <location>
        <begin position="24"/>
        <end position="26"/>
    </location>
    <ligand>
        <name>substrate</name>
    </ligand>
</feature>
<feature type="binding site" evidence="1">
    <location>
        <position position="40"/>
    </location>
    <ligand>
        <name>substrate</name>
    </ligand>
</feature>
<feature type="binding site" evidence="1">
    <location>
        <begin position="63"/>
        <end position="66"/>
    </location>
    <ligand>
        <name>substrate</name>
    </ligand>
</feature>
<feature type="binding site" evidence="1">
    <location>
        <position position="122"/>
    </location>
    <ligand>
        <name>substrate</name>
    </ligand>
</feature>
<feature type="binding site" evidence="1">
    <location>
        <position position="166"/>
    </location>
    <ligand>
        <name>substrate</name>
    </ligand>
</feature>
<feature type="binding site" evidence="1">
    <location>
        <position position="216"/>
    </location>
    <ligand>
        <name>ATP</name>
        <dbReference type="ChEBI" id="CHEBI:30616"/>
    </ligand>
</feature>
<feature type="binding site" evidence="1">
    <location>
        <position position="304"/>
    </location>
    <ligand>
        <name>ATP</name>
        <dbReference type="ChEBI" id="CHEBI:30616"/>
    </ligand>
</feature>
<feature type="binding site" evidence="1">
    <location>
        <position position="335"/>
    </location>
    <ligand>
        <name>ATP</name>
        <dbReference type="ChEBI" id="CHEBI:30616"/>
    </ligand>
</feature>
<feature type="binding site" evidence="1">
    <location>
        <begin position="364"/>
        <end position="367"/>
    </location>
    <ligand>
        <name>ATP</name>
        <dbReference type="ChEBI" id="CHEBI:30616"/>
    </ligand>
</feature>
<proteinExistence type="evidence at protein level"/>
<keyword id="KW-0067">ATP-binding</keyword>
<keyword id="KW-0963">Cytoplasm</keyword>
<keyword id="KW-0324">Glycolysis</keyword>
<keyword id="KW-0418">Kinase</keyword>
<keyword id="KW-0547">Nucleotide-binding</keyword>
<keyword id="KW-1185">Reference proteome</keyword>
<keyword id="KW-0808">Transferase</keyword>
<accession>A0QWW3</accession>
<accession>I7G8D9</accession>
<comment type="catalytic activity">
    <reaction evidence="1">
        <text>(2R)-3-phosphoglycerate + ATP = (2R)-3-phospho-glyceroyl phosphate + ADP</text>
        <dbReference type="Rhea" id="RHEA:14801"/>
        <dbReference type="ChEBI" id="CHEBI:30616"/>
        <dbReference type="ChEBI" id="CHEBI:57604"/>
        <dbReference type="ChEBI" id="CHEBI:58272"/>
        <dbReference type="ChEBI" id="CHEBI:456216"/>
        <dbReference type="EC" id="2.7.2.3"/>
    </reaction>
</comment>
<comment type="pathway">
    <text evidence="1">Carbohydrate degradation; glycolysis; pyruvate from D-glyceraldehyde 3-phosphate: step 2/5.</text>
</comment>
<comment type="subunit">
    <text evidence="1">Monomer.</text>
</comment>
<comment type="subcellular location">
    <subcellularLocation>
        <location evidence="1">Cytoplasm</location>
    </subcellularLocation>
</comment>
<comment type="similarity">
    <text evidence="1">Belongs to the phosphoglycerate kinase family.</text>
</comment>
<protein>
    <recommendedName>
        <fullName evidence="1">Phosphoglycerate kinase</fullName>
        <ecNumber evidence="1">2.7.2.3</ecNumber>
    </recommendedName>
</protein>
<sequence length="408" mass="42095">MSVKTLDDLLAEGVQGRGVLVRSDLNVPLDDDGNITDPGRVIASVPTLQALAEAGAKVIVTAHLGRPKGEPDPKLSLAPVAAALGEKLGRHVQLAGDVVGTDALARAEGLTDGDVLLLENIRFDARETSKDDSERLSLAKALAALVEGPDGSPGVFVSDGFGVVHRKQASVYDVATLLPHYAGTLVAAEVKVLQQLTSSTDRPYAVVLGGSKVSDKLAVIENLATKADSLIIGGGMCFTFLAAQGFSVGSSLLQEEMVDTCRRLLDEYADVIHLPVDIVVADKFAADAEAETVAADRIPDGKMGLDIGPGSVERFTALLSNAKTVFWNGPMGVFEFPAFAAGTKGVAEAIIGATGKGAFSVVGGGDSAAAVRRLGLPEDGFSHISTGGGASLEYLEGKELPGIQVLES</sequence>
<reference key="1">
    <citation type="submission" date="2006-10" db="EMBL/GenBank/DDBJ databases">
        <authorList>
            <person name="Fleischmann R.D."/>
            <person name="Dodson R.J."/>
            <person name="Haft D.H."/>
            <person name="Merkel J.S."/>
            <person name="Nelson W.C."/>
            <person name="Fraser C.M."/>
        </authorList>
    </citation>
    <scope>NUCLEOTIDE SEQUENCE [LARGE SCALE GENOMIC DNA]</scope>
    <source>
        <strain>ATCC 700084 / mc(2)155</strain>
    </source>
</reference>
<reference key="2">
    <citation type="journal article" date="2007" name="Genome Biol.">
        <title>Interrupted coding sequences in Mycobacterium smegmatis: authentic mutations or sequencing errors?</title>
        <authorList>
            <person name="Deshayes C."/>
            <person name="Perrodou E."/>
            <person name="Gallien S."/>
            <person name="Euphrasie D."/>
            <person name="Schaeffer C."/>
            <person name="Van-Dorsselaer A."/>
            <person name="Poch O."/>
            <person name="Lecompte O."/>
            <person name="Reyrat J.-M."/>
        </authorList>
    </citation>
    <scope>NUCLEOTIDE SEQUENCE [LARGE SCALE GENOMIC DNA]</scope>
    <source>
        <strain>ATCC 700084 / mc(2)155</strain>
    </source>
</reference>
<reference key="3">
    <citation type="journal article" date="2009" name="Genome Res.">
        <title>Ortho-proteogenomics: multiple proteomes investigation through orthology and a new MS-based protocol.</title>
        <authorList>
            <person name="Gallien S."/>
            <person name="Perrodou E."/>
            <person name="Carapito C."/>
            <person name="Deshayes C."/>
            <person name="Reyrat J.-M."/>
            <person name="Van Dorsselaer A."/>
            <person name="Poch O."/>
            <person name="Schaeffer C."/>
            <person name="Lecompte O."/>
        </authorList>
    </citation>
    <scope>NUCLEOTIDE SEQUENCE [LARGE SCALE GENOMIC DNA]</scope>
    <scope>IDENTIFICATION BY MASS SPECTROMETRY [LARGE SCALE ANALYSIS]</scope>
    <scope>CLEAVAGE OF INITIATOR METHIONINE</scope>
    <source>
        <strain>ATCC 700084 / mc(2)155</strain>
    </source>
</reference>